<gene>
    <name evidence="3" type="primary">VQ1</name>
    <name evidence="5" type="ordered locus">At1g17147</name>
    <name evidence="6" type="ORF">F20D23.16</name>
</gene>
<evidence type="ECO:0000250" key="1">
    <source>
        <dbReference type="UniProtKB" id="Q9M9F0"/>
    </source>
</evidence>
<evidence type="ECO:0000269" key="2">
    <source>
    </source>
</evidence>
<evidence type="ECO:0000303" key="3">
    <source>
    </source>
</evidence>
<evidence type="ECO:0000305" key="4"/>
<evidence type="ECO:0000312" key="5">
    <source>
        <dbReference type="Araport" id="AT1G17147"/>
    </source>
</evidence>
<evidence type="ECO:0000312" key="6">
    <source>
        <dbReference type="EMBL" id="AAD50018.1"/>
    </source>
</evidence>
<sequence>MSAGVRSEPMKVVFINTQYVQTDARSFKTIVQELTGKNAVVADGPYEFSGQGYGGKDSSQRFCGVGKEAERGVETTEFDSFFREMPPVGELYNLWSDH</sequence>
<feature type="chain" id="PRO_0000432307" description="VQ motif-containing protein 1">
    <location>
        <begin position="1"/>
        <end position="98"/>
    </location>
</feature>
<feature type="short sequence motif" description="VQ" evidence="4">
    <location>
        <begin position="27"/>
        <end position="36"/>
    </location>
</feature>
<organism>
    <name type="scientific">Arabidopsis thaliana</name>
    <name type="common">Mouse-ear cress</name>
    <dbReference type="NCBI Taxonomy" id="3702"/>
    <lineage>
        <taxon>Eukaryota</taxon>
        <taxon>Viridiplantae</taxon>
        <taxon>Streptophyta</taxon>
        <taxon>Embryophyta</taxon>
        <taxon>Tracheophyta</taxon>
        <taxon>Spermatophyta</taxon>
        <taxon>Magnoliopsida</taxon>
        <taxon>eudicotyledons</taxon>
        <taxon>Gunneridae</taxon>
        <taxon>Pentapetalae</taxon>
        <taxon>rosids</taxon>
        <taxon>malvids</taxon>
        <taxon>Brassicales</taxon>
        <taxon>Brassicaceae</taxon>
        <taxon>Camelineae</taxon>
        <taxon>Arabidopsis</taxon>
    </lineage>
</organism>
<accession>Q1G3U8</accession>
<accession>A0MDM3</accession>
<accession>Q9SHH3</accession>
<keyword id="KW-0539">Nucleus</keyword>
<keyword id="KW-1185">Reference proteome</keyword>
<dbReference type="EMBL" id="AC007651">
    <property type="protein sequence ID" value="AAD50018.1"/>
    <property type="status" value="ALT_INIT"/>
    <property type="molecule type" value="Genomic_DNA"/>
</dbReference>
<dbReference type="EMBL" id="CP002684">
    <property type="protein sequence ID" value="AEE29550.1"/>
    <property type="molecule type" value="Genomic_DNA"/>
</dbReference>
<dbReference type="EMBL" id="DQ487486">
    <property type="protein sequence ID" value="ABF59320.1"/>
    <property type="molecule type" value="Genomic_DNA"/>
</dbReference>
<dbReference type="EMBL" id="DQ652639">
    <property type="protein sequence ID" value="ABK28010.1"/>
    <property type="status" value="ALT_SEQ"/>
    <property type="molecule type" value="Genomic_DNA"/>
</dbReference>
<dbReference type="PIR" id="D86307">
    <property type="entry name" value="D86307"/>
</dbReference>
<dbReference type="RefSeq" id="NP_001117300.1">
    <property type="nucleotide sequence ID" value="NM_001123828.2"/>
</dbReference>
<dbReference type="SMR" id="Q1G3U8"/>
<dbReference type="FunCoup" id="Q1G3U8">
    <property type="interactions" value="22"/>
</dbReference>
<dbReference type="STRING" id="3702.Q1G3U8"/>
<dbReference type="PaxDb" id="3702-AT1G17147.1"/>
<dbReference type="ProteomicsDB" id="242750"/>
<dbReference type="EnsemblPlants" id="AT1G17147.1">
    <property type="protein sequence ID" value="AT1G17147.1"/>
    <property type="gene ID" value="AT1G17147"/>
</dbReference>
<dbReference type="GeneID" id="6240987"/>
<dbReference type="Gramene" id="AT1G17147.1">
    <property type="protein sequence ID" value="AT1G17147.1"/>
    <property type="gene ID" value="AT1G17147"/>
</dbReference>
<dbReference type="KEGG" id="ath:AT1G17147"/>
<dbReference type="Araport" id="AT1G17147"/>
<dbReference type="TAIR" id="AT1G17147"/>
<dbReference type="HOGENOM" id="CLU_169898_0_0_1"/>
<dbReference type="InParanoid" id="Q1G3U8"/>
<dbReference type="OMA" id="PYEFSGQ"/>
<dbReference type="OrthoDB" id="691083at2759"/>
<dbReference type="PhylomeDB" id="Q1G3U8"/>
<dbReference type="PRO" id="PR:Q1G3U8"/>
<dbReference type="Proteomes" id="UP000006548">
    <property type="component" value="Chromosome 1"/>
</dbReference>
<dbReference type="ExpressionAtlas" id="Q1G3U8">
    <property type="expression patterns" value="baseline and differential"/>
</dbReference>
<dbReference type="GO" id="GO:0005634">
    <property type="term" value="C:nucleus"/>
    <property type="evidence" value="ECO:0007669"/>
    <property type="project" value="UniProtKB-SubCell"/>
</dbReference>
<dbReference type="InterPro" id="IPR008889">
    <property type="entry name" value="VQ"/>
</dbReference>
<dbReference type="InterPro" id="IPR039608">
    <property type="entry name" value="VQ_1/10"/>
</dbReference>
<dbReference type="PANTHER" id="PTHR34777:SF7">
    <property type="entry name" value="VQ MOTIF-CONTAINING PROTEIN 1"/>
    <property type="match status" value="1"/>
</dbReference>
<dbReference type="PANTHER" id="PTHR34777">
    <property type="entry name" value="VQ MOTIF-CONTAINING PROTEIN 10"/>
    <property type="match status" value="1"/>
</dbReference>
<dbReference type="Pfam" id="PF05678">
    <property type="entry name" value="VQ"/>
    <property type="match status" value="1"/>
</dbReference>
<proteinExistence type="evidence at protein level"/>
<reference key="1">
    <citation type="journal article" date="2000" name="Nature">
        <title>Sequence and analysis of chromosome 1 of the plant Arabidopsis thaliana.</title>
        <authorList>
            <person name="Theologis A."/>
            <person name="Ecker J.R."/>
            <person name="Palm C.J."/>
            <person name="Federspiel N.A."/>
            <person name="Kaul S."/>
            <person name="White O."/>
            <person name="Alonso J."/>
            <person name="Altafi H."/>
            <person name="Araujo R."/>
            <person name="Bowman C.L."/>
            <person name="Brooks S.Y."/>
            <person name="Buehler E."/>
            <person name="Chan A."/>
            <person name="Chao Q."/>
            <person name="Chen H."/>
            <person name="Cheuk R.F."/>
            <person name="Chin C.W."/>
            <person name="Chung M.K."/>
            <person name="Conn L."/>
            <person name="Conway A.B."/>
            <person name="Conway A.R."/>
            <person name="Creasy T.H."/>
            <person name="Dewar K."/>
            <person name="Dunn P."/>
            <person name="Etgu P."/>
            <person name="Feldblyum T.V."/>
            <person name="Feng J.-D."/>
            <person name="Fong B."/>
            <person name="Fujii C.Y."/>
            <person name="Gill J.E."/>
            <person name="Goldsmith A.D."/>
            <person name="Haas B."/>
            <person name="Hansen N.F."/>
            <person name="Hughes B."/>
            <person name="Huizar L."/>
            <person name="Hunter J.L."/>
            <person name="Jenkins J."/>
            <person name="Johnson-Hopson C."/>
            <person name="Khan S."/>
            <person name="Khaykin E."/>
            <person name="Kim C.J."/>
            <person name="Koo H.L."/>
            <person name="Kremenetskaia I."/>
            <person name="Kurtz D.B."/>
            <person name="Kwan A."/>
            <person name="Lam B."/>
            <person name="Langin-Hooper S."/>
            <person name="Lee A."/>
            <person name="Lee J.M."/>
            <person name="Lenz C.A."/>
            <person name="Li J.H."/>
            <person name="Li Y.-P."/>
            <person name="Lin X."/>
            <person name="Liu S.X."/>
            <person name="Liu Z.A."/>
            <person name="Luros J.S."/>
            <person name="Maiti R."/>
            <person name="Marziali A."/>
            <person name="Militscher J."/>
            <person name="Miranda M."/>
            <person name="Nguyen M."/>
            <person name="Nierman W.C."/>
            <person name="Osborne B.I."/>
            <person name="Pai G."/>
            <person name="Peterson J."/>
            <person name="Pham P.K."/>
            <person name="Rizzo M."/>
            <person name="Rooney T."/>
            <person name="Rowley D."/>
            <person name="Sakano H."/>
            <person name="Salzberg S.L."/>
            <person name="Schwartz J.R."/>
            <person name="Shinn P."/>
            <person name="Southwick A.M."/>
            <person name="Sun H."/>
            <person name="Tallon L.J."/>
            <person name="Tambunga G."/>
            <person name="Toriumi M.J."/>
            <person name="Town C.D."/>
            <person name="Utterback T."/>
            <person name="Van Aken S."/>
            <person name="Vaysberg M."/>
            <person name="Vysotskaia V.S."/>
            <person name="Walker M."/>
            <person name="Wu D."/>
            <person name="Yu G."/>
            <person name="Fraser C.M."/>
            <person name="Venter J.C."/>
            <person name="Davis R.W."/>
        </authorList>
    </citation>
    <scope>NUCLEOTIDE SEQUENCE [LARGE SCALE GENOMIC DNA]</scope>
    <source>
        <strain>cv. Columbia</strain>
    </source>
</reference>
<reference key="2">
    <citation type="journal article" date="2017" name="Plant J.">
        <title>Araport11: a complete reannotation of the Arabidopsis thaliana reference genome.</title>
        <authorList>
            <person name="Cheng C.Y."/>
            <person name="Krishnakumar V."/>
            <person name="Chan A.P."/>
            <person name="Thibaud-Nissen F."/>
            <person name="Schobel S."/>
            <person name="Town C.D."/>
        </authorList>
    </citation>
    <scope>GENOME REANNOTATION</scope>
    <source>
        <strain>cv. Columbia</strain>
    </source>
</reference>
<reference key="3">
    <citation type="journal article" date="2006" name="Plant Biotechnol. J.">
        <title>Simultaneous high-throughput recombinational cloning of open reading frames in closed and open configurations.</title>
        <authorList>
            <person name="Underwood B.A."/>
            <person name="Vanderhaeghen R."/>
            <person name="Whitford R."/>
            <person name="Town C.D."/>
            <person name="Hilson P."/>
        </authorList>
    </citation>
    <scope>NUCLEOTIDE SEQUENCE [LARGE SCALE GENOMIC DNA]</scope>
    <source>
        <strain>cv. Columbia</strain>
    </source>
</reference>
<reference key="4">
    <citation type="journal article" date="2012" name="Plant Physiol.">
        <title>Structural and functional analysis of VQ motif-containing proteins in Arabidopsis as interacting proteins of WRKY transcription factors.</title>
        <authorList>
            <person name="Cheng Y."/>
            <person name="Zhou Y."/>
            <person name="Yang Y."/>
            <person name="Chi Y.J."/>
            <person name="Zhou J."/>
            <person name="Chen J.Y."/>
            <person name="Wang F."/>
            <person name="Fan B."/>
            <person name="Shi K."/>
            <person name="Zhou Y.H."/>
            <person name="Yu J.Q."/>
            <person name="Chen Z."/>
        </authorList>
    </citation>
    <scope>INTERACTION WITH WRKY33</scope>
    <scope>GENE FAMILY</scope>
    <scope>NOMENCLATURE</scope>
</reference>
<name>VQ1_ARATH</name>
<protein>
    <recommendedName>
        <fullName evidence="3">VQ motif-containing protein 1</fullName>
        <shortName evidence="3">AtVQ1</shortName>
    </recommendedName>
</protein>
<comment type="function">
    <text evidence="1">May modulate WRKY transcription factor activities.</text>
</comment>
<comment type="subunit">
    <text evidence="2">Interacts with WRKY33.</text>
</comment>
<comment type="subcellular location">
    <subcellularLocation>
        <location evidence="1">Nucleus</location>
    </subcellularLocation>
</comment>
<comment type="sequence caution" evidence="4">
    <conflict type="erroneous initiation">
        <sequence resource="EMBL-CDS" id="AAD50018"/>
    </conflict>
    <text>Truncated N-terminus.</text>
</comment>
<comment type="sequence caution" evidence="4">
    <conflict type="erroneous termination">
        <sequence resource="EMBL-CDS" id="ABK28010"/>
    </conflict>
    <text>Extended C-terminus.</text>
</comment>